<proteinExistence type="inferred from homology"/>
<comment type="function">
    <text evidence="1">Binds the lower part of the 30S subunit head. Binds mRNA in the 70S ribosome, positioning it for translation.</text>
</comment>
<comment type="subunit">
    <text evidence="1">Part of the 30S ribosomal subunit. Forms a tight complex with proteins S10 and S14.</text>
</comment>
<comment type="similarity">
    <text evidence="1">Belongs to the universal ribosomal protein uS3 family.</text>
</comment>
<accession>Q1BDA1</accession>
<keyword id="KW-0687">Ribonucleoprotein</keyword>
<keyword id="KW-0689">Ribosomal protein</keyword>
<keyword id="KW-0694">RNA-binding</keyword>
<keyword id="KW-0699">rRNA-binding</keyword>
<dbReference type="EMBL" id="CP000384">
    <property type="protein sequence ID" value="ABG07133.1"/>
    <property type="molecule type" value="Genomic_DNA"/>
</dbReference>
<dbReference type="SMR" id="Q1BDA1"/>
<dbReference type="KEGG" id="mmc:Mmcs_1019"/>
<dbReference type="HOGENOM" id="CLU_058591_0_0_11"/>
<dbReference type="BioCyc" id="MSP164756:G1G6O-1043-MONOMER"/>
<dbReference type="GO" id="GO:0022627">
    <property type="term" value="C:cytosolic small ribosomal subunit"/>
    <property type="evidence" value="ECO:0007669"/>
    <property type="project" value="TreeGrafter"/>
</dbReference>
<dbReference type="GO" id="GO:0003729">
    <property type="term" value="F:mRNA binding"/>
    <property type="evidence" value="ECO:0007669"/>
    <property type="project" value="UniProtKB-UniRule"/>
</dbReference>
<dbReference type="GO" id="GO:0019843">
    <property type="term" value="F:rRNA binding"/>
    <property type="evidence" value="ECO:0007669"/>
    <property type="project" value="UniProtKB-UniRule"/>
</dbReference>
<dbReference type="GO" id="GO:0003735">
    <property type="term" value="F:structural constituent of ribosome"/>
    <property type="evidence" value="ECO:0007669"/>
    <property type="project" value="InterPro"/>
</dbReference>
<dbReference type="GO" id="GO:0006412">
    <property type="term" value="P:translation"/>
    <property type="evidence" value="ECO:0007669"/>
    <property type="project" value="UniProtKB-UniRule"/>
</dbReference>
<dbReference type="CDD" id="cd02412">
    <property type="entry name" value="KH-II_30S_S3"/>
    <property type="match status" value="1"/>
</dbReference>
<dbReference type="FunFam" id="3.30.1140.32:FF:000002">
    <property type="entry name" value="30S ribosomal protein S3"/>
    <property type="match status" value="1"/>
</dbReference>
<dbReference type="FunFam" id="3.30.300.20:FF:000001">
    <property type="entry name" value="30S ribosomal protein S3"/>
    <property type="match status" value="1"/>
</dbReference>
<dbReference type="Gene3D" id="3.30.300.20">
    <property type="match status" value="1"/>
</dbReference>
<dbReference type="Gene3D" id="3.30.1140.32">
    <property type="entry name" value="Ribosomal protein S3, C-terminal domain"/>
    <property type="match status" value="1"/>
</dbReference>
<dbReference type="HAMAP" id="MF_01309_B">
    <property type="entry name" value="Ribosomal_uS3_B"/>
    <property type="match status" value="1"/>
</dbReference>
<dbReference type="InterPro" id="IPR004087">
    <property type="entry name" value="KH_dom"/>
</dbReference>
<dbReference type="InterPro" id="IPR015946">
    <property type="entry name" value="KH_dom-like_a/b"/>
</dbReference>
<dbReference type="InterPro" id="IPR004044">
    <property type="entry name" value="KH_dom_type_2"/>
</dbReference>
<dbReference type="InterPro" id="IPR009019">
    <property type="entry name" value="KH_sf_prok-type"/>
</dbReference>
<dbReference type="InterPro" id="IPR036419">
    <property type="entry name" value="Ribosomal_S3_C_sf"/>
</dbReference>
<dbReference type="InterPro" id="IPR005704">
    <property type="entry name" value="Ribosomal_uS3_bac-typ"/>
</dbReference>
<dbReference type="InterPro" id="IPR001351">
    <property type="entry name" value="Ribosomal_uS3_C"/>
</dbReference>
<dbReference type="InterPro" id="IPR018280">
    <property type="entry name" value="Ribosomal_uS3_CS"/>
</dbReference>
<dbReference type="NCBIfam" id="TIGR01009">
    <property type="entry name" value="rpsC_bact"/>
    <property type="match status" value="1"/>
</dbReference>
<dbReference type="PANTHER" id="PTHR11760">
    <property type="entry name" value="30S/40S RIBOSOMAL PROTEIN S3"/>
    <property type="match status" value="1"/>
</dbReference>
<dbReference type="PANTHER" id="PTHR11760:SF19">
    <property type="entry name" value="SMALL RIBOSOMAL SUBUNIT PROTEIN US3C"/>
    <property type="match status" value="1"/>
</dbReference>
<dbReference type="Pfam" id="PF07650">
    <property type="entry name" value="KH_2"/>
    <property type="match status" value="1"/>
</dbReference>
<dbReference type="Pfam" id="PF00189">
    <property type="entry name" value="Ribosomal_S3_C"/>
    <property type="match status" value="1"/>
</dbReference>
<dbReference type="SMART" id="SM00322">
    <property type="entry name" value="KH"/>
    <property type="match status" value="1"/>
</dbReference>
<dbReference type="SUPFAM" id="SSF54814">
    <property type="entry name" value="Prokaryotic type KH domain (KH-domain type II)"/>
    <property type="match status" value="1"/>
</dbReference>
<dbReference type="SUPFAM" id="SSF54821">
    <property type="entry name" value="Ribosomal protein S3 C-terminal domain"/>
    <property type="match status" value="1"/>
</dbReference>
<dbReference type="PROSITE" id="PS50823">
    <property type="entry name" value="KH_TYPE_2"/>
    <property type="match status" value="1"/>
</dbReference>
<dbReference type="PROSITE" id="PS00548">
    <property type="entry name" value="RIBOSOMAL_S3"/>
    <property type="match status" value="1"/>
</dbReference>
<sequence>MGQKINPHGFRLGITTDWKSRWYADKQYKDYVKEDVAIRRLLATGLERAGIADVEIERTRDRVRVDIHTARPGIVIGRRGTEADRIRADLEKLTKKQVQLNILEVKNPESVAQLVAQGVAEQLSNRVAFRRAMRKAIQSAMRQPNVKGIRVQCSGRLGGAEMSRSEFYREGRVPLHTLRADIDYGLYEAKTTFGRIGVKVWIYKGDIVGGKRELTAAAPAGADRPRRERPSGSRPRRSGASGTTATSTDAGRAASGTQEAPAAAEAAAGTEAAAGAAAETTTQNPGS</sequence>
<organism>
    <name type="scientific">Mycobacterium sp. (strain MCS)</name>
    <dbReference type="NCBI Taxonomy" id="164756"/>
    <lineage>
        <taxon>Bacteria</taxon>
        <taxon>Bacillati</taxon>
        <taxon>Actinomycetota</taxon>
        <taxon>Actinomycetes</taxon>
        <taxon>Mycobacteriales</taxon>
        <taxon>Mycobacteriaceae</taxon>
        <taxon>Mycobacterium</taxon>
    </lineage>
</organism>
<evidence type="ECO:0000255" key="1">
    <source>
        <dbReference type="HAMAP-Rule" id="MF_01309"/>
    </source>
</evidence>
<evidence type="ECO:0000256" key="2">
    <source>
        <dbReference type="SAM" id="MobiDB-lite"/>
    </source>
</evidence>
<evidence type="ECO:0000305" key="3"/>
<protein>
    <recommendedName>
        <fullName evidence="1">Small ribosomal subunit protein uS3</fullName>
    </recommendedName>
    <alternativeName>
        <fullName evidence="3">30S ribosomal protein S3</fullName>
    </alternativeName>
</protein>
<gene>
    <name evidence="1" type="primary">rpsC</name>
    <name type="ordered locus">Mmcs_1019</name>
</gene>
<reference key="1">
    <citation type="submission" date="2006-06" db="EMBL/GenBank/DDBJ databases">
        <title>Complete sequence of chromosome of Mycobacterium sp. MCS.</title>
        <authorList>
            <consortium name="US DOE Joint Genome Institute"/>
            <person name="Copeland A."/>
            <person name="Lucas S."/>
            <person name="Lapidus A."/>
            <person name="Barry K."/>
            <person name="Detter J.C."/>
            <person name="Glavina del Rio T."/>
            <person name="Hammon N."/>
            <person name="Israni S."/>
            <person name="Dalin E."/>
            <person name="Tice H."/>
            <person name="Pitluck S."/>
            <person name="Martinez M."/>
            <person name="Schmutz J."/>
            <person name="Larimer F."/>
            <person name="Land M."/>
            <person name="Hauser L."/>
            <person name="Kyrpides N."/>
            <person name="Kim E."/>
            <person name="Miller C.D."/>
            <person name="Hughes J.E."/>
            <person name="Anderson A.J."/>
            <person name="Sims R.C."/>
            <person name="Richardson P."/>
        </authorList>
    </citation>
    <scope>NUCLEOTIDE SEQUENCE [LARGE SCALE GENOMIC DNA]</scope>
    <source>
        <strain>MCS</strain>
    </source>
</reference>
<feature type="chain" id="PRO_0000293832" description="Small ribosomal subunit protein uS3">
    <location>
        <begin position="1"/>
        <end position="287"/>
    </location>
</feature>
<feature type="domain" description="KH type-2" evidence="1">
    <location>
        <begin position="38"/>
        <end position="106"/>
    </location>
</feature>
<feature type="region of interest" description="Disordered" evidence="2">
    <location>
        <begin position="216"/>
        <end position="287"/>
    </location>
</feature>
<feature type="compositionally biased region" description="Low complexity" evidence="2">
    <location>
        <begin position="238"/>
        <end position="287"/>
    </location>
</feature>
<name>RS3_MYCSS</name>